<accession>B1KQ88</accession>
<protein>
    <recommendedName>
        <fullName evidence="1">Dihydroxy-acid dehydratase</fullName>
        <shortName evidence="1">DAD</shortName>
        <ecNumber evidence="1">4.2.1.9</ecNumber>
    </recommendedName>
</protein>
<name>ILVD_SHEWM</name>
<evidence type="ECO:0000255" key="1">
    <source>
        <dbReference type="HAMAP-Rule" id="MF_00012"/>
    </source>
</evidence>
<reference key="1">
    <citation type="submission" date="2008-02" db="EMBL/GenBank/DDBJ databases">
        <title>Complete sequence of Shewanella woodyi ATCC 51908.</title>
        <authorList>
            <consortium name="US DOE Joint Genome Institute"/>
            <person name="Copeland A."/>
            <person name="Lucas S."/>
            <person name="Lapidus A."/>
            <person name="Glavina del Rio T."/>
            <person name="Dalin E."/>
            <person name="Tice H."/>
            <person name="Bruce D."/>
            <person name="Goodwin L."/>
            <person name="Pitluck S."/>
            <person name="Sims D."/>
            <person name="Brettin T."/>
            <person name="Detter J.C."/>
            <person name="Han C."/>
            <person name="Kuske C.R."/>
            <person name="Schmutz J."/>
            <person name="Larimer F."/>
            <person name="Land M."/>
            <person name="Hauser L."/>
            <person name="Kyrpides N."/>
            <person name="Lykidis A."/>
            <person name="Zhao J.-S."/>
            <person name="Richardson P."/>
        </authorList>
    </citation>
    <scope>NUCLEOTIDE SEQUENCE [LARGE SCALE GENOMIC DNA]</scope>
    <source>
        <strain>ATCC 51908 / MS32</strain>
    </source>
</reference>
<dbReference type="EC" id="4.2.1.9" evidence="1"/>
<dbReference type="EMBL" id="CP000961">
    <property type="protein sequence ID" value="ACA84743.1"/>
    <property type="molecule type" value="Genomic_DNA"/>
</dbReference>
<dbReference type="RefSeq" id="WP_012323092.1">
    <property type="nucleotide sequence ID" value="NC_010506.1"/>
</dbReference>
<dbReference type="SMR" id="B1KQ88"/>
<dbReference type="STRING" id="392500.Swoo_0445"/>
<dbReference type="KEGG" id="swd:Swoo_0445"/>
<dbReference type="eggNOG" id="COG0129">
    <property type="taxonomic scope" value="Bacteria"/>
</dbReference>
<dbReference type="HOGENOM" id="CLU_014271_4_2_6"/>
<dbReference type="UniPathway" id="UPA00047">
    <property type="reaction ID" value="UER00057"/>
</dbReference>
<dbReference type="UniPathway" id="UPA00049">
    <property type="reaction ID" value="UER00061"/>
</dbReference>
<dbReference type="Proteomes" id="UP000002168">
    <property type="component" value="Chromosome"/>
</dbReference>
<dbReference type="GO" id="GO:0005829">
    <property type="term" value="C:cytosol"/>
    <property type="evidence" value="ECO:0007669"/>
    <property type="project" value="TreeGrafter"/>
</dbReference>
<dbReference type="GO" id="GO:0051537">
    <property type="term" value="F:2 iron, 2 sulfur cluster binding"/>
    <property type="evidence" value="ECO:0007669"/>
    <property type="project" value="UniProtKB-UniRule"/>
</dbReference>
<dbReference type="GO" id="GO:0004160">
    <property type="term" value="F:dihydroxy-acid dehydratase activity"/>
    <property type="evidence" value="ECO:0007669"/>
    <property type="project" value="UniProtKB-UniRule"/>
</dbReference>
<dbReference type="GO" id="GO:0000287">
    <property type="term" value="F:magnesium ion binding"/>
    <property type="evidence" value="ECO:0007669"/>
    <property type="project" value="UniProtKB-UniRule"/>
</dbReference>
<dbReference type="GO" id="GO:0009097">
    <property type="term" value="P:isoleucine biosynthetic process"/>
    <property type="evidence" value="ECO:0007669"/>
    <property type="project" value="UniProtKB-UniRule"/>
</dbReference>
<dbReference type="GO" id="GO:0009099">
    <property type="term" value="P:L-valine biosynthetic process"/>
    <property type="evidence" value="ECO:0007669"/>
    <property type="project" value="UniProtKB-UniRule"/>
</dbReference>
<dbReference type="FunFam" id="3.50.30.80:FF:000001">
    <property type="entry name" value="Dihydroxy-acid dehydratase"/>
    <property type="match status" value="1"/>
</dbReference>
<dbReference type="Gene3D" id="3.50.30.80">
    <property type="entry name" value="IlvD/EDD C-terminal domain-like"/>
    <property type="match status" value="1"/>
</dbReference>
<dbReference type="HAMAP" id="MF_00012">
    <property type="entry name" value="IlvD"/>
    <property type="match status" value="1"/>
</dbReference>
<dbReference type="InterPro" id="IPR042096">
    <property type="entry name" value="Dihydro-acid_dehy_C"/>
</dbReference>
<dbReference type="InterPro" id="IPR004404">
    <property type="entry name" value="DihydroxyA_deHydtase"/>
</dbReference>
<dbReference type="InterPro" id="IPR020558">
    <property type="entry name" value="DiOHA_6PGluconate_deHydtase_CS"/>
</dbReference>
<dbReference type="InterPro" id="IPR056740">
    <property type="entry name" value="ILV_EDD_C"/>
</dbReference>
<dbReference type="InterPro" id="IPR000581">
    <property type="entry name" value="ILV_EDD_N"/>
</dbReference>
<dbReference type="InterPro" id="IPR037237">
    <property type="entry name" value="IlvD/EDD_N"/>
</dbReference>
<dbReference type="NCBIfam" id="TIGR00110">
    <property type="entry name" value="ilvD"/>
    <property type="match status" value="1"/>
</dbReference>
<dbReference type="NCBIfam" id="NF009103">
    <property type="entry name" value="PRK12448.1"/>
    <property type="match status" value="1"/>
</dbReference>
<dbReference type="PANTHER" id="PTHR43661">
    <property type="entry name" value="D-XYLONATE DEHYDRATASE"/>
    <property type="match status" value="1"/>
</dbReference>
<dbReference type="PANTHER" id="PTHR43661:SF3">
    <property type="entry name" value="D-XYLONATE DEHYDRATASE YAGF-RELATED"/>
    <property type="match status" value="1"/>
</dbReference>
<dbReference type="Pfam" id="PF24877">
    <property type="entry name" value="ILV_EDD_C"/>
    <property type="match status" value="1"/>
</dbReference>
<dbReference type="Pfam" id="PF00920">
    <property type="entry name" value="ILVD_EDD_N"/>
    <property type="match status" value="1"/>
</dbReference>
<dbReference type="SUPFAM" id="SSF143975">
    <property type="entry name" value="IlvD/EDD N-terminal domain-like"/>
    <property type="match status" value="1"/>
</dbReference>
<dbReference type="SUPFAM" id="SSF52016">
    <property type="entry name" value="LeuD/IlvD-like"/>
    <property type="match status" value="1"/>
</dbReference>
<dbReference type="PROSITE" id="PS00886">
    <property type="entry name" value="ILVD_EDD_1"/>
    <property type="match status" value="1"/>
</dbReference>
<dbReference type="PROSITE" id="PS00887">
    <property type="entry name" value="ILVD_EDD_2"/>
    <property type="match status" value="1"/>
</dbReference>
<organism>
    <name type="scientific">Shewanella woodyi (strain ATCC 51908 / MS32)</name>
    <dbReference type="NCBI Taxonomy" id="392500"/>
    <lineage>
        <taxon>Bacteria</taxon>
        <taxon>Pseudomonadati</taxon>
        <taxon>Pseudomonadota</taxon>
        <taxon>Gammaproteobacteria</taxon>
        <taxon>Alteromonadales</taxon>
        <taxon>Shewanellaceae</taxon>
        <taxon>Shewanella</taxon>
    </lineage>
</organism>
<comment type="function">
    <text evidence="1">Functions in the biosynthesis of branched-chain amino acids. Catalyzes the dehydration of (2R,3R)-2,3-dihydroxy-3-methylpentanoate (2,3-dihydroxy-3-methylvalerate) into 2-oxo-3-methylpentanoate (2-oxo-3-methylvalerate) and of (2R)-2,3-dihydroxy-3-methylbutanoate (2,3-dihydroxyisovalerate) into 2-oxo-3-methylbutanoate (2-oxoisovalerate), the penultimate precursor to L-isoleucine and L-valine, respectively.</text>
</comment>
<comment type="catalytic activity">
    <reaction evidence="1">
        <text>(2R)-2,3-dihydroxy-3-methylbutanoate = 3-methyl-2-oxobutanoate + H2O</text>
        <dbReference type="Rhea" id="RHEA:24809"/>
        <dbReference type="ChEBI" id="CHEBI:11851"/>
        <dbReference type="ChEBI" id="CHEBI:15377"/>
        <dbReference type="ChEBI" id="CHEBI:49072"/>
        <dbReference type="EC" id="4.2.1.9"/>
    </reaction>
    <physiologicalReaction direction="left-to-right" evidence="1">
        <dbReference type="Rhea" id="RHEA:24810"/>
    </physiologicalReaction>
</comment>
<comment type="catalytic activity">
    <reaction evidence="1">
        <text>(2R,3R)-2,3-dihydroxy-3-methylpentanoate = (S)-3-methyl-2-oxopentanoate + H2O</text>
        <dbReference type="Rhea" id="RHEA:27694"/>
        <dbReference type="ChEBI" id="CHEBI:15377"/>
        <dbReference type="ChEBI" id="CHEBI:35146"/>
        <dbReference type="ChEBI" id="CHEBI:49258"/>
        <dbReference type="EC" id="4.2.1.9"/>
    </reaction>
    <physiologicalReaction direction="left-to-right" evidence="1">
        <dbReference type="Rhea" id="RHEA:27695"/>
    </physiologicalReaction>
</comment>
<comment type="cofactor">
    <cofactor evidence="1">
        <name>[2Fe-2S] cluster</name>
        <dbReference type="ChEBI" id="CHEBI:190135"/>
    </cofactor>
    <text evidence="1">Binds 1 [2Fe-2S] cluster per subunit. This cluster acts as a Lewis acid cofactor.</text>
</comment>
<comment type="cofactor">
    <cofactor evidence="1">
        <name>Mg(2+)</name>
        <dbReference type="ChEBI" id="CHEBI:18420"/>
    </cofactor>
</comment>
<comment type="pathway">
    <text evidence="1">Amino-acid biosynthesis; L-isoleucine biosynthesis; L-isoleucine from 2-oxobutanoate: step 3/4.</text>
</comment>
<comment type="pathway">
    <text evidence="1">Amino-acid biosynthesis; L-valine biosynthesis; L-valine from pyruvate: step 3/4.</text>
</comment>
<comment type="subunit">
    <text evidence="1">Homodimer.</text>
</comment>
<comment type="similarity">
    <text evidence="1">Belongs to the IlvD/Edd family.</text>
</comment>
<sequence>MPKLRSATSTQGRNMAGARALWRATGVKDSDFGKPIIAISNSFTQFVPGHVHLKDMGSLVAGAIEEAGGIAKEFNTIAVDDGIAMGHGGMLYSLPSRELIADSVEYMVNAHCADALVCISNCDKITPGMMMAALRLNIPVIFVSGGPMEAGKTKLSGDIIKLDLVDAMVAGADERVSDEDSEKIERSACPTCGSCSGMFTANSMNCLTEALGLSLPGNGSMLATHADRRELFLEAGRRIMDLATRYYKHDDESALPRNIANFNAFENAMTLDIAMGGSSNTVLHLLAGAQEAKVDFTMDDIDRLSRKVPHLCKVAPSTPKYHMEDVHRAGGVMGILGELDRAGLIHNDAYHVAGKNLKEVLAKWDIAQSQDEAVRKFFSAGPAGIPTTKAFSQDCRWDSVDDDREGGCIRKREFAFSQEGGLAVLSGNIALDGCIVKTAGVEEENHTFIGSARVYESQDDAVAGILGGEVVAGDVVVIRYEGPKGGPGMQEMLYPTSYLKSRGLGKACALITDGRFSGGTSGLSIGHVSPEAAAGGTIGLVETGDRIEIDIPARSIKLAISDVELAARRSAMESRGKQAWKPVDRIREVSLALKAYALLATSADKGAVRDVSKLED</sequence>
<proteinExistence type="inferred from homology"/>
<gene>
    <name evidence="1" type="primary">ilvD</name>
    <name type="ordered locus">Swoo_0445</name>
</gene>
<feature type="chain" id="PRO_1000089414" description="Dihydroxy-acid dehydratase">
    <location>
        <begin position="1"/>
        <end position="616"/>
    </location>
</feature>
<feature type="active site" description="Proton acceptor" evidence="1">
    <location>
        <position position="517"/>
    </location>
</feature>
<feature type="binding site" evidence="1">
    <location>
        <position position="81"/>
    </location>
    <ligand>
        <name>Mg(2+)</name>
        <dbReference type="ChEBI" id="CHEBI:18420"/>
    </ligand>
</feature>
<feature type="binding site" evidence="1">
    <location>
        <position position="122"/>
    </location>
    <ligand>
        <name>[2Fe-2S] cluster</name>
        <dbReference type="ChEBI" id="CHEBI:190135"/>
    </ligand>
</feature>
<feature type="binding site" evidence="1">
    <location>
        <position position="123"/>
    </location>
    <ligand>
        <name>Mg(2+)</name>
        <dbReference type="ChEBI" id="CHEBI:18420"/>
    </ligand>
</feature>
<feature type="binding site" description="via carbamate group" evidence="1">
    <location>
        <position position="124"/>
    </location>
    <ligand>
        <name>Mg(2+)</name>
        <dbReference type="ChEBI" id="CHEBI:18420"/>
    </ligand>
</feature>
<feature type="binding site" evidence="1">
    <location>
        <position position="195"/>
    </location>
    <ligand>
        <name>[2Fe-2S] cluster</name>
        <dbReference type="ChEBI" id="CHEBI:190135"/>
    </ligand>
</feature>
<feature type="binding site" evidence="1">
    <location>
        <position position="491"/>
    </location>
    <ligand>
        <name>Mg(2+)</name>
        <dbReference type="ChEBI" id="CHEBI:18420"/>
    </ligand>
</feature>
<feature type="modified residue" description="N6-carboxylysine" evidence="1">
    <location>
        <position position="124"/>
    </location>
</feature>
<keyword id="KW-0001">2Fe-2S</keyword>
<keyword id="KW-0028">Amino-acid biosynthesis</keyword>
<keyword id="KW-0100">Branched-chain amino acid biosynthesis</keyword>
<keyword id="KW-0408">Iron</keyword>
<keyword id="KW-0411">Iron-sulfur</keyword>
<keyword id="KW-0456">Lyase</keyword>
<keyword id="KW-0460">Magnesium</keyword>
<keyword id="KW-0479">Metal-binding</keyword>
<keyword id="KW-1185">Reference proteome</keyword>